<proteinExistence type="evidence at transcript level"/>
<sequence length="575" mass="66250">MPYSEVEAKFLGPGKEQTREPCYKKLKSAADDGVSPLRGGPDIHRIQEKPRNNRVAVATINFRRRVCPQEDKTSTDVLKPLHKEMPGDKLGGSESIGSPALQDGKPSPLAKDDEIYSTSKAFIGPIYKPPEKKKCRERKSETDTFSSIDSKRRQEEKQKSNSKKLEMDTELSQFYKEIEELENENEASQGSCTEPEPSEEPIISYDWACNTLKSEEENKDLSDVLQSHCGYQEYLEDEPDYPCDEQLMPAFCETSFPSFRPEWQSMHPFVIPHDPLSSFNYFNFQRFGTPLHPSPDVFHGRDDSQMQNGCYVDSYQDGWSCLTFDQNDEYANYDVTSNNVHPFRNGCSVQDESVNNGFCEIRECWQDPSMDKHNETDRFVNQWFQEEKLNKLQKLLILLRGLPGSGKTTLSRILLGQSRDGIVFSTDDYFHHQDGYRYNVNQLGDAHDWNQNRAKQAIDQGRSPVIIDNTNTQAWEMKPYVEMAIGKGYRVEFHEPETWWKFDPEELEKRNKHGVSRKKIAQMLDRYEFQMSISIVMNSVEPTQKSIQRPLPLEGEQRWGGSLGSHSQVSIADDY</sequence>
<protein>
    <recommendedName>
        <fullName>NEDD4-binding protein 2-like 2</fullName>
    </recommendedName>
    <alternativeName>
        <fullName>Phosphonoformate immuno-associated protein 5 homolog</fullName>
    </alternativeName>
</protein>
<feature type="chain" id="PRO_0000299027" description="NEDD4-binding protein 2-like 2">
    <location>
        <begin position="1"/>
        <end position="575"/>
    </location>
</feature>
<feature type="region of interest" description="Disordered" evidence="2">
    <location>
        <begin position="69"/>
        <end position="169"/>
    </location>
</feature>
<feature type="region of interest" description="Disordered" evidence="2">
    <location>
        <begin position="555"/>
        <end position="575"/>
    </location>
</feature>
<feature type="coiled-coil region" evidence="1">
    <location>
        <begin position="162"/>
        <end position="194"/>
    </location>
</feature>
<feature type="compositionally biased region" description="Basic and acidic residues" evidence="2">
    <location>
        <begin position="69"/>
        <end position="87"/>
    </location>
</feature>
<feature type="compositionally biased region" description="Basic and acidic residues" evidence="2">
    <location>
        <begin position="129"/>
        <end position="142"/>
    </location>
</feature>
<feature type="compositionally biased region" description="Basic and acidic residues" evidence="2">
    <location>
        <begin position="149"/>
        <end position="167"/>
    </location>
</feature>
<feature type="compositionally biased region" description="Polar residues" evidence="2">
    <location>
        <begin position="564"/>
        <end position="575"/>
    </location>
</feature>
<feature type="splice variant" id="VSP_027519" description="In isoform 2." evidence="3">
    <original>AKQAIDQGRSPVIIDNTNTQAWEMKPYVEMAIGKGYRVEFHE</original>
    <variation>GLFWAKVPGMEYLITGHT</variation>
    <location>
        <begin position="454"/>
        <end position="495"/>
    </location>
</feature>
<feature type="splice variant" id="VSP_027520" description="In isoform 2." evidence="3">
    <location>
        <begin position="496"/>
        <end position="575"/>
    </location>
</feature>
<dbReference type="EMBL" id="AC158558">
    <property type="status" value="NOT_ANNOTATED_CDS"/>
    <property type="molecule type" value="Genomic_DNA"/>
</dbReference>
<dbReference type="EMBL" id="BC037393">
    <property type="status" value="NOT_ANNOTATED_CDS"/>
    <property type="molecule type" value="mRNA"/>
</dbReference>
<dbReference type="CCDS" id="CCDS19888.2">
    <molecule id="Q8JZS6-1"/>
</dbReference>
<dbReference type="RefSeq" id="NP_958757.2">
    <molecule id="Q8JZS6-1"/>
    <property type="nucleotide sequence ID" value="NM_201369.3"/>
</dbReference>
<dbReference type="SMR" id="Q8JZS6"/>
<dbReference type="BioGRID" id="238052">
    <property type="interactions" value="4"/>
</dbReference>
<dbReference type="FunCoup" id="Q8JZS6">
    <property type="interactions" value="1658"/>
</dbReference>
<dbReference type="STRING" id="10090.ENSMUSP00000113895"/>
<dbReference type="iPTMnet" id="Q8JZS6"/>
<dbReference type="PhosphoSitePlus" id="Q8JZS6"/>
<dbReference type="PaxDb" id="10090-ENSMUSP00000113895"/>
<dbReference type="PeptideAtlas" id="Q8JZS6"/>
<dbReference type="ProteomicsDB" id="287552">
    <molecule id="Q8JZS6-1"/>
</dbReference>
<dbReference type="ProteomicsDB" id="287553">
    <molecule id="Q8JZS6-2"/>
</dbReference>
<dbReference type="Pumba" id="Q8JZS6"/>
<dbReference type="Antibodypedia" id="42083">
    <property type="antibodies" value="233 antibodies from 22 providers"/>
</dbReference>
<dbReference type="DNASU" id="381695"/>
<dbReference type="Ensembl" id="ENSMUST00000118316.8">
    <molecule id="Q8JZS6-1"/>
    <property type="protein sequence ID" value="ENSMUSP00000113895.2"/>
    <property type="gene ID" value="ENSMUSG00000029655.18"/>
</dbReference>
<dbReference type="GeneID" id="381695"/>
<dbReference type="KEGG" id="mmu:381695"/>
<dbReference type="UCSC" id="uc009aug.3">
    <molecule id="Q8JZS6-2"/>
    <property type="organism name" value="mouse"/>
</dbReference>
<dbReference type="UCSC" id="uc012eho.1">
    <molecule id="Q8JZS6-1"/>
    <property type="organism name" value="mouse"/>
</dbReference>
<dbReference type="AGR" id="MGI:2687207"/>
<dbReference type="CTD" id="10443"/>
<dbReference type="MGI" id="MGI:2687207">
    <property type="gene designation" value="N4bp2l2"/>
</dbReference>
<dbReference type="VEuPathDB" id="HostDB:ENSMUSG00000029655"/>
<dbReference type="eggNOG" id="KOG2401">
    <property type="taxonomic scope" value="Eukaryota"/>
</dbReference>
<dbReference type="GeneTree" id="ENSGT00940000161440"/>
<dbReference type="HOGENOM" id="CLU_006655_0_0_1"/>
<dbReference type="InParanoid" id="Q8JZS6"/>
<dbReference type="OMA" id="VHPFRNG"/>
<dbReference type="PhylomeDB" id="Q8JZS6"/>
<dbReference type="TreeFam" id="TF339118"/>
<dbReference type="BioGRID-ORCS" id="381695">
    <property type="hits" value="0 hits in 77 CRISPR screens"/>
</dbReference>
<dbReference type="ChiTaRS" id="N4bp2l2">
    <property type="organism name" value="mouse"/>
</dbReference>
<dbReference type="PRO" id="PR:Q8JZS6"/>
<dbReference type="Proteomes" id="UP000000589">
    <property type="component" value="Chromosome 5"/>
</dbReference>
<dbReference type="RNAct" id="Q8JZS6">
    <property type="molecule type" value="protein"/>
</dbReference>
<dbReference type="Bgee" id="ENSMUSG00000029655">
    <property type="expression patterns" value="Expressed in spermatid and 198 other cell types or tissues"/>
</dbReference>
<dbReference type="ExpressionAtlas" id="Q8JZS6">
    <property type="expression patterns" value="baseline and differential"/>
</dbReference>
<dbReference type="GO" id="GO:0005634">
    <property type="term" value="C:nucleus"/>
    <property type="evidence" value="ECO:0000314"/>
    <property type="project" value="MGI"/>
</dbReference>
<dbReference type="GO" id="GO:0017053">
    <property type="term" value="C:transcription repressor complex"/>
    <property type="evidence" value="ECO:0007669"/>
    <property type="project" value="Ensembl"/>
</dbReference>
<dbReference type="GO" id="GO:0019899">
    <property type="term" value="F:enzyme binding"/>
    <property type="evidence" value="ECO:0007669"/>
    <property type="project" value="Ensembl"/>
</dbReference>
<dbReference type="GO" id="GO:0003714">
    <property type="term" value="F:transcription corepressor activity"/>
    <property type="evidence" value="ECO:0000315"/>
    <property type="project" value="UniProtKB"/>
</dbReference>
<dbReference type="GO" id="GO:0001824">
    <property type="term" value="P:blastocyst development"/>
    <property type="evidence" value="ECO:0000315"/>
    <property type="project" value="MGI"/>
</dbReference>
<dbReference type="GO" id="GO:0001701">
    <property type="term" value="P:in utero embryonic development"/>
    <property type="evidence" value="ECO:0000315"/>
    <property type="project" value="MGI"/>
</dbReference>
<dbReference type="GO" id="GO:1902037">
    <property type="term" value="P:negative regulation of hematopoietic stem cell differentiation"/>
    <property type="evidence" value="ECO:0007669"/>
    <property type="project" value="Ensembl"/>
</dbReference>
<dbReference type="GO" id="GO:0000122">
    <property type="term" value="P:negative regulation of transcription by RNA polymerase II"/>
    <property type="evidence" value="ECO:0000315"/>
    <property type="project" value="UniProtKB"/>
</dbReference>
<dbReference type="GO" id="GO:1902035">
    <property type="term" value="P:positive regulation of hematopoietic stem cell proliferation"/>
    <property type="evidence" value="ECO:0007669"/>
    <property type="project" value="Ensembl"/>
</dbReference>
<dbReference type="FunFam" id="3.40.50.300:FF:000620">
    <property type="entry name" value="NEDD4-binding protein 2 isoform X1"/>
    <property type="match status" value="1"/>
</dbReference>
<dbReference type="Gene3D" id="3.40.50.300">
    <property type="entry name" value="P-loop containing nucleotide triphosphate hydrolases"/>
    <property type="match status" value="1"/>
</dbReference>
<dbReference type="InterPro" id="IPR026302">
    <property type="entry name" value="NEDD4-bd_p2"/>
</dbReference>
<dbReference type="InterPro" id="IPR027417">
    <property type="entry name" value="P-loop_NTPase"/>
</dbReference>
<dbReference type="PANTHER" id="PTHR13308">
    <property type="entry name" value="NEDD4-BINDING PROTEIN 2-LIKE 1"/>
    <property type="match status" value="1"/>
</dbReference>
<dbReference type="PANTHER" id="PTHR13308:SF23">
    <property type="entry name" value="NEDD4-BINDING PROTEIN 2-LIKE 2"/>
    <property type="match status" value="1"/>
</dbReference>
<dbReference type="Pfam" id="PF13671">
    <property type="entry name" value="AAA_33"/>
    <property type="match status" value="1"/>
</dbReference>
<dbReference type="SUPFAM" id="SSF52540">
    <property type="entry name" value="P-loop containing nucleoside triphosphate hydrolases"/>
    <property type="match status" value="1"/>
</dbReference>
<comment type="alternative products">
    <event type="alternative splicing"/>
    <isoform>
        <id>Q8JZS6-1</id>
        <name>1</name>
        <sequence type="displayed"/>
    </isoform>
    <isoform>
        <id>Q8JZS6-2</id>
        <name>2</name>
        <sequence type="described" ref="VSP_027519 VSP_027520"/>
    </isoform>
</comment>
<comment type="miscellaneous">
    <molecule>Isoform 2</molecule>
    <text evidence="4">Due to a partial intron retention.</text>
</comment>
<organism>
    <name type="scientific">Mus musculus</name>
    <name type="common">Mouse</name>
    <dbReference type="NCBI Taxonomy" id="10090"/>
    <lineage>
        <taxon>Eukaryota</taxon>
        <taxon>Metazoa</taxon>
        <taxon>Chordata</taxon>
        <taxon>Craniata</taxon>
        <taxon>Vertebrata</taxon>
        <taxon>Euteleostomi</taxon>
        <taxon>Mammalia</taxon>
        <taxon>Eutheria</taxon>
        <taxon>Euarchontoglires</taxon>
        <taxon>Glires</taxon>
        <taxon>Rodentia</taxon>
        <taxon>Myomorpha</taxon>
        <taxon>Muroidea</taxon>
        <taxon>Muridae</taxon>
        <taxon>Murinae</taxon>
        <taxon>Mus</taxon>
        <taxon>Mus</taxon>
    </lineage>
</organism>
<reference key="1">
    <citation type="journal article" date="2009" name="PLoS Biol.">
        <title>Lineage-specific biology revealed by a finished genome assembly of the mouse.</title>
        <authorList>
            <person name="Church D.M."/>
            <person name="Goodstadt L."/>
            <person name="Hillier L.W."/>
            <person name="Zody M.C."/>
            <person name="Goldstein S."/>
            <person name="She X."/>
            <person name="Bult C.J."/>
            <person name="Agarwala R."/>
            <person name="Cherry J.L."/>
            <person name="DiCuccio M."/>
            <person name="Hlavina W."/>
            <person name="Kapustin Y."/>
            <person name="Meric P."/>
            <person name="Maglott D."/>
            <person name="Birtle Z."/>
            <person name="Marques A.C."/>
            <person name="Graves T."/>
            <person name="Zhou S."/>
            <person name="Teague B."/>
            <person name="Potamousis K."/>
            <person name="Churas C."/>
            <person name="Place M."/>
            <person name="Herschleb J."/>
            <person name="Runnheim R."/>
            <person name="Forrest D."/>
            <person name="Amos-Landgraf J."/>
            <person name="Schwartz D.C."/>
            <person name="Cheng Z."/>
            <person name="Lindblad-Toh K."/>
            <person name="Eichler E.E."/>
            <person name="Ponting C.P."/>
        </authorList>
    </citation>
    <scope>NUCLEOTIDE SEQUENCE [LARGE SCALE GENOMIC DNA]</scope>
    <source>
        <strain>C57BL/6J</strain>
    </source>
</reference>
<reference key="2">
    <citation type="journal article" date="2004" name="Genome Res.">
        <title>The status, quality, and expansion of the NIH full-length cDNA project: the Mammalian Gene Collection (MGC).</title>
        <authorList>
            <consortium name="The MGC Project Team"/>
        </authorList>
    </citation>
    <scope>NUCLEOTIDE SEQUENCE [LARGE SCALE MRNA] (ISOFORM 2)</scope>
    <source>
        <strain>FVB/N</strain>
        <tissue>Salivary gland</tissue>
    </source>
</reference>
<name>N42L2_MOUSE</name>
<accession>Q8JZS6</accession>
<gene>
    <name type="primary">N4bp2l2</name>
    <name type="synonym">Pfaap5</name>
</gene>
<keyword id="KW-0025">Alternative splicing</keyword>
<keyword id="KW-0175">Coiled coil</keyword>
<keyword id="KW-1185">Reference proteome</keyword>
<evidence type="ECO:0000255" key="1"/>
<evidence type="ECO:0000256" key="2">
    <source>
        <dbReference type="SAM" id="MobiDB-lite"/>
    </source>
</evidence>
<evidence type="ECO:0000303" key="3">
    <source>
    </source>
</evidence>
<evidence type="ECO:0000305" key="4"/>